<comment type="function">
    <text evidence="1">Produces ATP from ADP in the presence of a proton gradient across the membrane.</text>
</comment>
<comment type="subunit">
    <text evidence="1">F-type ATPases have 2 components, CF(1) - the catalytic core - and CF(0) - the membrane proton channel. CF(1) has five subunits: alpha(3), beta(3), gamma(1), delta(1), epsilon(1). CF(0) has three main subunits: a, b and c.</text>
</comment>
<comment type="subcellular location">
    <subcellularLocation>
        <location evidence="1">Cell inner membrane</location>
        <topology evidence="1">Peripheral membrane protein</topology>
    </subcellularLocation>
</comment>
<comment type="similarity">
    <text evidence="1">Belongs to the ATPase epsilon chain family.</text>
</comment>
<evidence type="ECO:0000255" key="1">
    <source>
        <dbReference type="HAMAP-Rule" id="MF_00530"/>
    </source>
</evidence>
<gene>
    <name evidence="1" type="primary">atpC</name>
    <name type="ordered locus">Rpal_0170</name>
</gene>
<protein>
    <recommendedName>
        <fullName evidence="1">ATP synthase epsilon chain</fullName>
    </recommendedName>
    <alternativeName>
        <fullName evidence="1">ATP synthase F1 sector epsilon subunit</fullName>
    </alternativeName>
    <alternativeName>
        <fullName evidence="1">F-ATPase epsilon subunit</fullName>
    </alternativeName>
</protein>
<reference key="1">
    <citation type="submission" date="2008-05" db="EMBL/GenBank/DDBJ databases">
        <title>Complete sequence of Rhodopseudomonas palustris TIE-1.</title>
        <authorList>
            <consortium name="US DOE Joint Genome Institute"/>
            <person name="Lucas S."/>
            <person name="Copeland A."/>
            <person name="Lapidus A."/>
            <person name="Glavina del Rio T."/>
            <person name="Dalin E."/>
            <person name="Tice H."/>
            <person name="Pitluck S."/>
            <person name="Chain P."/>
            <person name="Malfatti S."/>
            <person name="Shin M."/>
            <person name="Vergez L."/>
            <person name="Lang D."/>
            <person name="Schmutz J."/>
            <person name="Larimer F."/>
            <person name="Land M."/>
            <person name="Hauser L."/>
            <person name="Kyrpides N."/>
            <person name="Mikhailova N."/>
            <person name="Emerson D."/>
            <person name="Newman D.K."/>
            <person name="Roden E."/>
            <person name="Richardson P."/>
        </authorList>
    </citation>
    <scope>NUCLEOTIDE SEQUENCE [LARGE SCALE GENOMIC DNA]</scope>
    <source>
        <strain>TIE-1</strain>
    </source>
</reference>
<organism>
    <name type="scientific">Rhodopseudomonas palustris (strain TIE-1)</name>
    <dbReference type="NCBI Taxonomy" id="395960"/>
    <lineage>
        <taxon>Bacteria</taxon>
        <taxon>Pseudomonadati</taxon>
        <taxon>Pseudomonadota</taxon>
        <taxon>Alphaproteobacteria</taxon>
        <taxon>Hyphomicrobiales</taxon>
        <taxon>Nitrobacteraceae</taxon>
        <taxon>Rhodopseudomonas</taxon>
    </lineage>
</organism>
<name>ATPE_RHOPT</name>
<sequence>MSTFHFDLVSPEMVAFSGDVDQVDIPGAEGDFGVLAGHAPVVAVIRPGILTVTAGANKQKIVVLGGIAEVSDKGLTVLADVATPAPDVDLQDFAATIQTMEQQIPGKVGDELDRAIERLDHFKSIQHELNTTAMH</sequence>
<feature type="chain" id="PRO_1000127884" description="ATP synthase epsilon chain">
    <location>
        <begin position="1"/>
        <end position="135"/>
    </location>
</feature>
<keyword id="KW-0066">ATP synthesis</keyword>
<keyword id="KW-0997">Cell inner membrane</keyword>
<keyword id="KW-1003">Cell membrane</keyword>
<keyword id="KW-0139">CF(1)</keyword>
<keyword id="KW-0375">Hydrogen ion transport</keyword>
<keyword id="KW-0406">Ion transport</keyword>
<keyword id="KW-0472">Membrane</keyword>
<keyword id="KW-0813">Transport</keyword>
<proteinExistence type="inferred from homology"/>
<dbReference type="EMBL" id="CP001096">
    <property type="protein sequence ID" value="ACE98732.1"/>
    <property type="molecule type" value="Genomic_DNA"/>
</dbReference>
<dbReference type="RefSeq" id="WP_011155743.1">
    <property type="nucleotide sequence ID" value="NC_011004.1"/>
</dbReference>
<dbReference type="SMR" id="B3Q744"/>
<dbReference type="KEGG" id="rpt:Rpal_0170"/>
<dbReference type="HOGENOM" id="CLU_084338_2_1_5"/>
<dbReference type="OrthoDB" id="9799969at2"/>
<dbReference type="Proteomes" id="UP000001725">
    <property type="component" value="Chromosome"/>
</dbReference>
<dbReference type="GO" id="GO:0005886">
    <property type="term" value="C:plasma membrane"/>
    <property type="evidence" value="ECO:0007669"/>
    <property type="project" value="UniProtKB-SubCell"/>
</dbReference>
<dbReference type="GO" id="GO:0045259">
    <property type="term" value="C:proton-transporting ATP synthase complex"/>
    <property type="evidence" value="ECO:0007669"/>
    <property type="project" value="UniProtKB-KW"/>
</dbReference>
<dbReference type="GO" id="GO:0005524">
    <property type="term" value="F:ATP binding"/>
    <property type="evidence" value="ECO:0007669"/>
    <property type="project" value="UniProtKB-UniRule"/>
</dbReference>
<dbReference type="GO" id="GO:0046933">
    <property type="term" value="F:proton-transporting ATP synthase activity, rotational mechanism"/>
    <property type="evidence" value="ECO:0007669"/>
    <property type="project" value="UniProtKB-UniRule"/>
</dbReference>
<dbReference type="CDD" id="cd12152">
    <property type="entry name" value="F1-ATPase_delta"/>
    <property type="match status" value="1"/>
</dbReference>
<dbReference type="Gene3D" id="2.60.15.10">
    <property type="entry name" value="F0F1 ATP synthase delta/epsilon subunit, N-terminal"/>
    <property type="match status" value="1"/>
</dbReference>
<dbReference type="HAMAP" id="MF_00530">
    <property type="entry name" value="ATP_synth_epsil_bac"/>
    <property type="match status" value="1"/>
</dbReference>
<dbReference type="InterPro" id="IPR001469">
    <property type="entry name" value="ATP_synth_F1_dsu/esu"/>
</dbReference>
<dbReference type="InterPro" id="IPR020546">
    <property type="entry name" value="ATP_synth_F1_dsu/esu_N"/>
</dbReference>
<dbReference type="InterPro" id="IPR036771">
    <property type="entry name" value="ATPsynth_dsu/esu_N"/>
</dbReference>
<dbReference type="NCBIfam" id="TIGR01216">
    <property type="entry name" value="ATP_synt_epsi"/>
    <property type="match status" value="1"/>
</dbReference>
<dbReference type="NCBIfam" id="NF009982">
    <property type="entry name" value="PRK13448.1"/>
    <property type="match status" value="1"/>
</dbReference>
<dbReference type="PANTHER" id="PTHR13822">
    <property type="entry name" value="ATP SYNTHASE DELTA/EPSILON CHAIN"/>
    <property type="match status" value="1"/>
</dbReference>
<dbReference type="PANTHER" id="PTHR13822:SF10">
    <property type="entry name" value="ATP SYNTHASE EPSILON CHAIN, CHLOROPLASTIC"/>
    <property type="match status" value="1"/>
</dbReference>
<dbReference type="Pfam" id="PF02823">
    <property type="entry name" value="ATP-synt_DE_N"/>
    <property type="match status" value="1"/>
</dbReference>
<dbReference type="SUPFAM" id="SSF51344">
    <property type="entry name" value="Epsilon subunit of F1F0-ATP synthase N-terminal domain"/>
    <property type="match status" value="1"/>
</dbReference>
<accession>B3Q744</accession>